<organism>
    <name type="scientific">Escherichia coli O9:H4 (strain HS)</name>
    <dbReference type="NCBI Taxonomy" id="331112"/>
    <lineage>
        <taxon>Bacteria</taxon>
        <taxon>Pseudomonadati</taxon>
        <taxon>Pseudomonadota</taxon>
        <taxon>Gammaproteobacteria</taxon>
        <taxon>Enterobacterales</taxon>
        <taxon>Enterobacteriaceae</taxon>
        <taxon>Escherichia</taxon>
    </lineage>
</organism>
<feature type="chain" id="PRO_1000059479" description="Ferrochelatase">
    <location>
        <begin position="1"/>
        <end position="320"/>
    </location>
</feature>
<feature type="binding site" evidence="1">
    <location>
        <position position="194"/>
    </location>
    <ligand>
        <name>Fe cation</name>
        <dbReference type="ChEBI" id="CHEBI:24875"/>
    </ligand>
</feature>
<feature type="binding site" evidence="1">
    <location>
        <position position="275"/>
    </location>
    <ligand>
        <name>Fe cation</name>
        <dbReference type="ChEBI" id="CHEBI:24875"/>
    </ligand>
</feature>
<accession>A7ZXD3</accession>
<evidence type="ECO:0000255" key="1">
    <source>
        <dbReference type="HAMAP-Rule" id="MF_00323"/>
    </source>
</evidence>
<proteinExistence type="inferred from homology"/>
<dbReference type="EC" id="4.98.1.1" evidence="1"/>
<dbReference type="EMBL" id="CP000802">
    <property type="protein sequence ID" value="ABV04937.1"/>
    <property type="molecule type" value="Genomic_DNA"/>
</dbReference>
<dbReference type="RefSeq" id="WP_001250117.1">
    <property type="nucleotide sequence ID" value="NC_009800.1"/>
</dbReference>
<dbReference type="SMR" id="A7ZXD3"/>
<dbReference type="KEGG" id="ecx:EcHS_A0552"/>
<dbReference type="HOGENOM" id="CLU_018884_0_0_6"/>
<dbReference type="UniPathway" id="UPA00252">
    <property type="reaction ID" value="UER00325"/>
</dbReference>
<dbReference type="GO" id="GO:0005737">
    <property type="term" value="C:cytoplasm"/>
    <property type="evidence" value="ECO:0007669"/>
    <property type="project" value="UniProtKB-SubCell"/>
</dbReference>
<dbReference type="GO" id="GO:0004325">
    <property type="term" value="F:ferrochelatase activity"/>
    <property type="evidence" value="ECO:0007669"/>
    <property type="project" value="UniProtKB-UniRule"/>
</dbReference>
<dbReference type="GO" id="GO:0046872">
    <property type="term" value="F:metal ion binding"/>
    <property type="evidence" value="ECO:0007669"/>
    <property type="project" value="UniProtKB-KW"/>
</dbReference>
<dbReference type="GO" id="GO:0006783">
    <property type="term" value="P:heme biosynthetic process"/>
    <property type="evidence" value="ECO:0007669"/>
    <property type="project" value="UniProtKB-UniRule"/>
</dbReference>
<dbReference type="CDD" id="cd00419">
    <property type="entry name" value="Ferrochelatase_C"/>
    <property type="match status" value="1"/>
</dbReference>
<dbReference type="CDD" id="cd03411">
    <property type="entry name" value="Ferrochelatase_N"/>
    <property type="match status" value="1"/>
</dbReference>
<dbReference type="FunFam" id="3.40.50.1400:FF:000004">
    <property type="entry name" value="Ferrochelatase"/>
    <property type="match status" value="1"/>
</dbReference>
<dbReference type="Gene3D" id="3.40.50.1400">
    <property type="match status" value="2"/>
</dbReference>
<dbReference type="HAMAP" id="MF_00323">
    <property type="entry name" value="Ferrochelatase"/>
    <property type="match status" value="1"/>
</dbReference>
<dbReference type="InterPro" id="IPR001015">
    <property type="entry name" value="Ferrochelatase"/>
</dbReference>
<dbReference type="InterPro" id="IPR019772">
    <property type="entry name" value="Ferrochelatase_AS"/>
</dbReference>
<dbReference type="InterPro" id="IPR033644">
    <property type="entry name" value="Ferrochelatase_C"/>
</dbReference>
<dbReference type="InterPro" id="IPR033659">
    <property type="entry name" value="Ferrochelatase_N"/>
</dbReference>
<dbReference type="NCBIfam" id="TIGR00109">
    <property type="entry name" value="hemH"/>
    <property type="match status" value="1"/>
</dbReference>
<dbReference type="PANTHER" id="PTHR11108">
    <property type="entry name" value="FERROCHELATASE"/>
    <property type="match status" value="1"/>
</dbReference>
<dbReference type="PANTHER" id="PTHR11108:SF1">
    <property type="entry name" value="FERROCHELATASE, MITOCHONDRIAL"/>
    <property type="match status" value="1"/>
</dbReference>
<dbReference type="Pfam" id="PF00762">
    <property type="entry name" value="Ferrochelatase"/>
    <property type="match status" value="1"/>
</dbReference>
<dbReference type="SUPFAM" id="SSF53800">
    <property type="entry name" value="Chelatase"/>
    <property type="match status" value="1"/>
</dbReference>
<dbReference type="PROSITE" id="PS00534">
    <property type="entry name" value="FERROCHELATASE"/>
    <property type="match status" value="1"/>
</dbReference>
<keyword id="KW-0963">Cytoplasm</keyword>
<keyword id="KW-0350">Heme biosynthesis</keyword>
<keyword id="KW-0408">Iron</keyword>
<keyword id="KW-0456">Lyase</keyword>
<keyword id="KW-0479">Metal-binding</keyword>
<keyword id="KW-0627">Porphyrin biosynthesis</keyword>
<comment type="function">
    <text evidence="1">Catalyzes the ferrous insertion into protoporphyrin IX.</text>
</comment>
<comment type="catalytic activity">
    <reaction evidence="1">
        <text>heme b + 2 H(+) = protoporphyrin IX + Fe(2+)</text>
        <dbReference type="Rhea" id="RHEA:22584"/>
        <dbReference type="ChEBI" id="CHEBI:15378"/>
        <dbReference type="ChEBI" id="CHEBI:29033"/>
        <dbReference type="ChEBI" id="CHEBI:57306"/>
        <dbReference type="ChEBI" id="CHEBI:60344"/>
        <dbReference type="EC" id="4.98.1.1"/>
    </reaction>
</comment>
<comment type="pathway">
    <text evidence="1">Porphyrin-containing compound metabolism; protoheme biosynthesis; protoheme from protoporphyrin-IX: step 1/1.</text>
</comment>
<comment type="subunit">
    <text evidence="1">Monomer.</text>
</comment>
<comment type="subcellular location">
    <subcellularLocation>
        <location evidence="1">Cytoplasm</location>
    </subcellularLocation>
</comment>
<comment type="similarity">
    <text evidence="1">Belongs to the ferrochelatase family.</text>
</comment>
<name>HEMH_ECOHS</name>
<gene>
    <name evidence="1" type="primary">hemH</name>
    <name type="ordered locus">EcHS_A0552</name>
</gene>
<protein>
    <recommendedName>
        <fullName evidence="1">Ferrochelatase</fullName>
        <ecNumber evidence="1">4.98.1.1</ecNumber>
    </recommendedName>
    <alternativeName>
        <fullName evidence="1">Heme synthase</fullName>
    </alternativeName>
    <alternativeName>
        <fullName evidence="1">Protoheme ferro-lyase</fullName>
    </alternativeName>
</protein>
<reference key="1">
    <citation type="journal article" date="2008" name="J. Bacteriol.">
        <title>The pangenome structure of Escherichia coli: comparative genomic analysis of E. coli commensal and pathogenic isolates.</title>
        <authorList>
            <person name="Rasko D.A."/>
            <person name="Rosovitz M.J."/>
            <person name="Myers G.S.A."/>
            <person name="Mongodin E.F."/>
            <person name="Fricke W.F."/>
            <person name="Gajer P."/>
            <person name="Crabtree J."/>
            <person name="Sebaihia M."/>
            <person name="Thomson N.R."/>
            <person name="Chaudhuri R."/>
            <person name="Henderson I.R."/>
            <person name="Sperandio V."/>
            <person name="Ravel J."/>
        </authorList>
    </citation>
    <scope>NUCLEOTIDE SEQUENCE [LARGE SCALE GENOMIC DNA]</scope>
    <source>
        <strain>HS</strain>
    </source>
</reference>
<sequence>MRQTKTGILLANLGTPDAPTPEAVKRYLKQFLSDRRVVDTSRLLWWPLLRGVILPLRSPRVAKLYASVWMEGGSPLMVYSRQQQQALAQRLPETPVALGMSYGSPSLESAVDELLAEHVDHIVVLPLYPQYSCSTVGAVWDELARILARKRSIPGISFIRDYADNHDYINALANSVRASFAKHGEPDLLLLSYHGIPQRYADEGDDYPQRCRTTTRELASALGMAPEKVMMTFQSRFGREPWLMPYTDETLKMLGEKGVGHIQVMCPGFAADCLETLEEIAEQNREVFLGAGGKKYEYIPALNATPEHIEMMANLVAAYR</sequence>